<proteinExistence type="inferred from homology"/>
<name>SMRB_SHIF8</name>
<feature type="chain" id="PRO_1000084367" description="Ribosome rescue factor SmrB">
    <location>
        <begin position="1"/>
        <end position="183"/>
    </location>
</feature>
<feature type="domain" description="Smr" evidence="1">
    <location>
        <begin position="98"/>
        <end position="173"/>
    </location>
</feature>
<dbReference type="EC" id="3.1.-.-" evidence="1"/>
<dbReference type="EMBL" id="CP000266">
    <property type="protein sequence ID" value="ABF04510.1"/>
    <property type="molecule type" value="Genomic_DNA"/>
</dbReference>
<dbReference type="RefSeq" id="WP_000730806.1">
    <property type="nucleotide sequence ID" value="NC_008258.1"/>
</dbReference>
<dbReference type="SMR" id="Q0T2F4"/>
<dbReference type="GeneID" id="93774844"/>
<dbReference type="KEGG" id="sfv:SFV_2399"/>
<dbReference type="HOGENOM" id="CLU_055978_4_0_6"/>
<dbReference type="Proteomes" id="UP000000659">
    <property type="component" value="Chromosome"/>
</dbReference>
<dbReference type="GO" id="GO:0004521">
    <property type="term" value="F:RNA endonuclease activity"/>
    <property type="evidence" value="ECO:0007669"/>
    <property type="project" value="UniProtKB-UniRule"/>
</dbReference>
<dbReference type="GO" id="GO:0019843">
    <property type="term" value="F:rRNA binding"/>
    <property type="evidence" value="ECO:0007669"/>
    <property type="project" value="UniProtKB-UniRule"/>
</dbReference>
<dbReference type="GO" id="GO:0072344">
    <property type="term" value="P:rescue of stalled ribosome"/>
    <property type="evidence" value="ECO:0007669"/>
    <property type="project" value="UniProtKB-UniRule"/>
</dbReference>
<dbReference type="Gene3D" id="3.30.1370.110">
    <property type="match status" value="1"/>
</dbReference>
<dbReference type="HAMAP" id="MF_01042">
    <property type="entry name" value="SmrB"/>
    <property type="match status" value="1"/>
</dbReference>
<dbReference type="InterPro" id="IPR002625">
    <property type="entry name" value="Smr_dom"/>
</dbReference>
<dbReference type="InterPro" id="IPR036063">
    <property type="entry name" value="Smr_dom_sf"/>
</dbReference>
<dbReference type="InterPro" id="IPR022990">
    <property type="entry name" value="SmrB-like"/>
</dbReference>
<dbReference type="NCBIfam" id="NF003432">
    <property type="entry name" value="PRK04946.1"/>
    <property type="match status" value="1"/>
</dbReference>
<dbReference type="PANTHER" id="PTHR35562">
    <property type="entry name" value="DNA ENDONUCLEASE SMRA-RELATED"/>
    <property type="match status" value="1"/>
</dbReference>
<dbReference type="PANTHER" id="PTHR35562:SF1">
    <property type="entry name" value="UPF0115 PROTEIN YFCN"/>
    <property type="match status" value="1"/>
</dbReference>
<dbReference type="Pfam" id="PF01713">
    <property type="entry name" value="Smr"/>
    <property type="match status" value="1"/>
</dbReference>
<dbReference type="SMART" id="SM00463">
    <property type="entry name" value="SMR"/>
    <property type="match status" value="1"/>
</dbReference>
<dbReference type="SUPFAM" id="SSF160443">
    <property type="entry name" value="SMR domain-like"/>
    <property type="match status" value="1"/>
</dbReference>
<dbReference type="PROSITE" id="PS50828">
    <property type="entry name" value="SMR"/>
    <property type="match status" value="1"/>
</dbReference>
<reference key="1">
    <citation type="journal article" date="2006" name="BMC Genomics">
        <title>Complete genome sequence of Shigella flexneri 5b and comparison with Shigella flexneri 2a.</title>
        <authorList>
            <person name="Nie H."/>
            <person name="Yang F."/>
            <person name="Zhang X."/>
            <person name="Yang J."/>
            <person name="Chen L."/>
            <person name="Wang J."/>
            <person name="Xiong Z."/>
            <person name="Peng J."/>
            <person name="Sun L."/>
            <person name="Dong J."/>
            <person name="Xue Y."/>
            <person name="Xu X."/>
            <person name="Chen S."/>
            <person name="Yao Z."/>
            <person name="Shen Y."/>
            <person name="Jin Q."/>
        </authorList>
    </citation>
    <scope>NUCLEOTIDE SEQUENCE [LARGE SCALE GENOMIC DNA]</scope>
    <source>
        <strain>8401</strain>
    </source>
</reference>
<comment type="function">
    <text evidence="1">Acts as a ribosome collision sensor. Detects stalled/collided disomes (pairs of ribosomes where the leading ribosome is stalled and a second ribosome has collided with it) and endonucleolytically cleaves mRNA at the 5' boundary of the stalled ribosome. Stalled/collided disomes form a new interface (primarily via the 30S subunits) that binds SmrB. Cleaved mRNA becomes available for tmRNA ligation, leading to ribosomal subunit dissociation and rescue of stalled ribosomes.</text>
</comment>
<comment type="subunit">
    <text evidence="1">Associates with collided ribosomes, but not with correctly translating polysomes.</text>
</comment>
<comment type="similarity">
    <text evidence="1">Belongs to the SmrB family.</text>
</comment>
<keyword id="KW-0255">Endonuclease</keyword>
<keyword id="KW-0378">Hydrolase</keyword>
<keyword id="KW-0540">Nuclease</keyword>
<keyword id="KW-0694">RNA-binding</keyword>
<keyword id="KW-0699">rRNA-binding</keyword>
<protein>
    <recommendedName>
        <fullName evidence="1">Ribosome rescue factor SmrB</fullName>
        <ecNumber evidence="1">3.1.-.-</ecNumber>
    </recommendedName>
</protein>
<accession>Q0T2F4</accession>
<sequence length="183" mass="21013">MKKKTTLSEEDQALFRQLMAGTRKIKQDTIVHRPQRKKISEVPVKRLIQEQADASHYFSDEFQPLLNTEGPVKYVRPDVSHFEAKKLRRGDYSPELFLDLHGLTQLQAKQELGALIAACRREHVFCACVMHGHGKHILKQQTPLWLAQHPHVMAFHQAPKEYGGDAALLVLIEVEEWLPPELP</sequence>
<organism>
    <name type="scientific">Shigella flexneri serotype 5b (strain 8401)</name>
    <dbReference type="NCBI Taxonomy" id="373384"/>
    <lineage>
        <taxon>Bacteria</taxon>
        <taxon>Pseudomonadati</taxon>
        <taxon>Pseudomonadota</taxon>
        <taxon>Gammaproteobacteria</taxon>
        <taxon>Enterobacterales</taxon>
        <taxon>Enterobacteriaceae</taxon>
        <taxon>Shigella</taxon>
    </lineage>
</organism>
<evidence type="ECO:0000255" key="1">
    <source>
        <dbReference type="HAMAP-Rule" id="MF_01042"/>
    </source>
</evidence>
<gene>
    <name evidence="1" type="primary">smrB</name>
    <name type="ordered locus">SFV_2399</name>
</gene>